<dbReference type="EMBL" id="L77117">
    <property type="protein sequence ID" value="AAB98713.1"/>
    <property type="molecule type" value="Genomic_DNA"/>
</dbReference>
<dbReference type="PIR" id="G64389">
    <property type="entry name" value="G64389"/>
</dbReference>
<dbReference type="SMR" id="Q58129"/>
<dbReference type="FunCoup" id="Q58129">
    <property type="interactions" value="234"/>
</dbReference>
<dbReference type="STRING" id="243232.MJ_0719"/>
<dbReference type="PaxDb" id="243232-MJ_0719"/>
<dbReference type="EnsemblBacteria" id="AAB98713">
    <property type="protein sequence ID" value="AAB98713"/>
    <property type="gene ID" value="MJ_0719"/>
</dbReference>
<dbReference type="KEGG" id="mja:MJ_0719"/>
<dbReference type="eggNOG" id="arCOG00187">
    <property type="taxonomic scope" value="Archaea"/>
</dbReference>
<dbReference type="HOGENOM" id="CLU_017344_4_1_2"/>
<dbReference type="InParanoid" id="Q58129"/>
<dbReference type="PhylomeDB" id="Q58129"/>
<dbReference type="Proteomes" id="UP000000805">
    <property type="component" value="Chromosome"/>
</dbReference>
<dbReference type="GO" id="GO:0043190">
    <property type="term" value="C:ATP-binding cassette (ABC) transporter complex"/>
    <property type="evidence" value="ECO:0000318"/>
    <property type="project" value="GO_Central"/>
</dbReference>
<dbReference type="GO" id="GO:0005524">
    <property type="term" value="F:ATP binding"/>
    <property type="evidence" value="ECO:0007669"/>
    <property type="project" value="UniProtKB-KW"/>
</dbReference>
<dbReference type="GO" id="GO:0016887">
    <property type="term" value="F:ATP hydrolysis activity"/>
    <property type="evidence" value="ECO:0007669"/>
    <property type="project" value="InterPro"/>
</dbReference>
<dbReference type="GO" id="GO:0042626">
    <property type="term" value="F:ATPase-coupled transmembrane transporter activity"/>
    <property type="evidence" value="ECO:0000318"/>
    <property type="project" value="GO_Central"/>
</dbReference>
<dbReference type="GO" id="GO:0016491">
    <property type="term" value="F:oxidoreductase activity"/>
    <property type="evidence" value="ECO:0007669"/>
    <property type="project" value="UniProtKB-ARBA"/>
</dbReference>
<dbReference type="CDD" id="cd03236">
    <property type="entry name" value="ABC_RNaseL_inhibitor_domain1"/>
    <property type="match status" value="1"/>
</dbReference>
<dbReference type="CDD" id="cd03237">
    <property type="entry name" value="ABC_RNaseL_inhibitor_domain2"/>
    <property type="match status" value="1"/>
</dbReference>
<dbReference type="FunFam" id="3.40.50.300:FF:000152">
    <property type="entry name" value="ATP-binding cassette, sub-family E, member 1"/>
    <property type="match status" value="1"/>
</dbReference>
<dbReference type="FunFam" id="3.40.50.300:FF:001546">
    <property type="entry name" value="RNase L inhibitor homolog"/>
    <property type="match status" value="1"/>
</dbReference>
<dbReference type="Gene3D" id="3.40.50.300">
    <property type="entry name" value="P-loop containing nucleotide triphosphate hydrolases"/>
    <property type="match status" value="2"/>
</dbReference>
<dbReference type="InterPro" id="IPR017896">
    <property type="entry name" value="4Fe4S_Fe-S-bd"/>
</dbReference>
<dbReference type="InterPro" id="IPR017900">
    <property type="entry name" value="4Fe4S_Fe_S_CS"/>
</dbReference>
<dbReference type="InterPro" id="IPR003593">
    <property type="entry name" value="AAA+_ATPase"/>
</dbReference>
<dbReference type="InterPro" id="IPR003439">
    <property type="entry name" value="ABC_transporter-like_ATP-bd"/>
</dbReference>
<dbReference type="InterPro" id="IPR017871">
    <property type="entry name" value="ABC_transporter-like_CS"/>
</dbReference>
<dbReference type="InterPro" id="IPR027417">
    <property type="entry name" value="P-loop_NTPase"/>
</dbReference>
<dbReference type="InterPro" id="IPR013283">
    <property type="entry name" value="RLI1"/>
</dbReference>
<dbReference type="InterPro" id="IPR034348">
    <property type="entry name" value="RLI_dom_1"/>
</dbReference>
<dbReference type="InterPro" id="IPR007209">
    <property type="entry name" value="RNaseL-inhib-like_metal-bd_dom"/>
</dbReference>
<dbReference type="NCBIfam" id="NF009945">
    <property type="entry name" value="PRK13409.1"/>
    <property type="match status" value="1"/>
</dbReference>
<dbReference type="PANTHER" id="PTHR19248">
    <property type="entry name" value="ATP-BINDING TRANSPORT PROTEIN-RELATED"/>
    <property type="match status" value="1"/>
</dbReference>
<dbReference type="Pfam" id="PF00005">
    <property type="entry name" value="ABC_tran"/>
    <property type="match status" value="2"/>
</dbReference>
<dbReference type="Pfam" id="PF00037">
    <property type="entry name" value="Fer4"/>
    <property type="match status" value="1"/>
</dbReference>
<dbReference type="Pfam" id="PF04068">
    <property type="entry name" value="Fer4_RLI"/>
    <property type="match status" value="1"/>
</dbReference>
<dbReference type="PRINTS" id="PR01868">
    <property type="entry name" value="ABCEFAMILY"/>
</dbReference>
<dbReference type="SMART" id="SM00382">
    <property type="entry name" value="AAA"/>
    <property type="match status" value="2"/>
</dbReference>
<dbReference type="SUPFAM" id="SSF54862">
    <property type="entry name" value="4Fe-4S ferredoxins"/>
    <property type="match status" value="1"/>
</dbReference>
<dbReference type="SUPFAM" id="SSF52540">
    <property type="entry name" value="P-loop containing nucleoside triphosphate hydrolases"/>
    <property type="match status" value="2"/>
</dbReference>
<dbReference type="PROSITE" id="PS00198">
    <property type="entry name" value="4FE4S_FER_1"/>
    <property type="match status" value="1"/>
</dbReference>
<dbReference type="PROSITE" id="PS51379">
    <property type="entry name" value="4FE4S_FER_2"/>
    <property type="match status" value="2"/>
</dbReference>
<dbReference type="PROSITE" id="PS00211">
    <property type="entry name" value="ABC_TRANSPORTER_1"/>
    <property type="match status" value="2"/>
</dbReference>
<dbReference type="PROSITE" id="PS50893">
    <property type="entry name" value="ABC_TRANSPORTER_2"/>
    <property type="match status" value="2"/>
</dbReference>
<comment type="similarity">
    <text evidence="4">Belongs to the ABC transporter superfamily.</text>
</comment>
<reference key="1">
    <citation type="journal article" date="1996" name="Science">
        <title>Complete genome sequence of the methanogenic archaeon, Methanococcus jannaschii.</title>
        <authorList>
            <person name="Bult C.J."/>
            <person name="White O."/>
            <person name="Olsen G.J."/>
            <person name="Zhou L."/>
            <person name="Fleischmann R.D."/>
            <person name="Sutton G.G."/>
            <person name="Blake J.A."/>
            <person name="FitzGerald L.M."/>
            <person name="Clayton R.A."/>
            <person name="Gocayne J.D."/>
            <person name="Kerlavage A.R."/>
            <person name="Dougherty B.A."/>
            <person name="Tomb J.-F."/>
            <person name="Adams M.D."/>
            <person name="Reich C.I."/>
            <person name="Overbeek R."/>
            <person name="Kirkness E.F."/>
            <person name="Weinstock K.G."/>
            <person name="Merrick J.M."/>
            <person name="Glodek A."/>
            <person name="Scott J.L."/>
            <person name="Geoghagen N.S.M."/>
            <person name="Weidman J.F."/>
            <person name="Fuhrmann J.L."/>
            <person name="Nguyen D."/>
            <person name="Utterback T.R."/>
            <person name="Kelley J.M."/>
            <person name="Peterson J.D."/>
            <person name="Sadow P.W."/>
            <person name="Hanna M.C."/>
            <person name="Cotton M.D."/>
            <person name="Roberts K.M."/>
            <person name="Hurst M.A."/>
            <person name="Kaine B.P."/>
            <person name="Borodovsky M."/>
            <person name="Klenk H.-P."/>
            <person name="Fraser C.M."/>
            <person name="Smith H.O."/>
            <person name="Woese C.R."/>
            <person name="Venter J.C."/>
        </authorList>
    </citation>
    <scope>NUCLEOTIDE SEQUENCE [LARGE SCALE GENOMIC DNA]</scope>
    <source>
        <strain>ATCC 43067 / DSM 2661 / JAL-1 / JCM 10045 / NBRC 100440</strain>
    </source>
</reference>
<evidence type="ECO:0000255" key="1">
    <source>
        <dbReference type="PROSITE-ProRule" id="PRU00434"/>
    </source>
</evidence>
<evidence type="ECO:0000255" key="2">
    <source>
        <dbReference type="PROSITE-ProRule" id="PRU00711"/>
    </source>
</evidence>
<evidence type="ECO:0000256" key="3">
    <source>
        <dbReference type="SAM" id="MobiDB-lite"/>
    </source>
</evidence>
<evidence type="ECO:0000305" key="4"/>
<sequence>MKLGFYLLGGDFMRLAIIDYDRCQPKKCSMECMKYCPGVRMGEKTIEIDENTGKPVISEVLCSGCGICVKRCPFKAISIIGLPEELSEDKIVHSYGQNRFKLFGLVIPRDGVVGIIGQNGIGKSTVLRILAGELIPNLGKHDKEPNYDDVIKYFRGTELQEYFEKLKNKGVKAIHKVQYVDILPKVVKGKVGDLLKKVDEKGKFDEVVEKLELKNILDRELSQLSGGELQRVAIAAAYLRNGDIYFFDEPSSWLDIRQRFNAARLIRELNKVVVVEHDLIVLDYLSDYIHIMYGVPSAYGIVSMPKSVRVGINEYLYGELREENIRFRKEPIIFEKRAVIDFKNRPILLSYSSMKKTLGDFKLEVSGGTIYKGEVIGILGPNGIGKTTFVKLLAGVIKPDEGEVIKEGDIKVSYKPQYITPDYDGTVEDLLSSITNIHTSYYKSEIINPLQLEKLLDREVRELSGGELQRVAIAACLSRDADIYLLDEPSAFLDVEQRLRVSKVIRRIADEKEAGMFVVDHDILFQDYISDRFIVFSGEPGKFGVGSSPMNKRDGANKFLKEMQITFRRDPETGRPRANKEGSQRDIMQKEKGEYYYVDE</sequence>
<name>Y719_METJA</name>
<feature type="chain" id="PRO_0000093220" description="Uncharacterized ABC transporter ATP-binding protein MJ0719">
    <location>
        <begin position="1"/>
        <end position="600"/>
    </location>
</feature>
<feature type="domain" description="4Fe-4S ferredoxin-type 1" evidence="2">
    <location>
        <begin position="14"/>
        <end position="44"/>
    </location>
</feature>
<feature type="domain" description="4Fe-4S ferredoxin-type 2" evidence="2">
    <location>
        <begin position="53"/>
        <end position="82"/>
    </location>
</feature>
<feature type="domain" description="ABC transporter 1" evidence="1">
    <location>
        <begin position="77"/>
        <end position="318"/>
    </location>
</feature>
<feature type="domain" description="ABC transporter 2" evidence="1">
    <location>
        <begin position="348"/>
        <end position="563"/>
    </location>
</feature>
<feature type="region of interest" description="Disordered" evidence="3">
    <location>
        <begin position="569"/>
        <end position="600"/>
    </location>
</feature>
<feature type="compositionally biased region" description="Basic and acidic residues" evidence="3">
    <location>
        <begin position="569"/>
        <end position="594"/>
    </location>
</feature>
<feature type="binding site" evidence="1">
    <location>
        <begin position="117"/>
        <end position="124"/>
    </location>
    <ligand>
        <name>ATP</name>
        <dbReference type="ChEBI" id="CHEBI:30616"/>
        <label>1</label>
    </ligand>
</feature>
<feature type="binding site" evidence="1">
    <location>
        <begin position="380"/>
        <end position="387"/>
    </location>
    <ligand>
        <name>ATP</name>
        <dbReference type="ChEBI" id="CHEBI:30616"/>
        <label>2</label>
    </ligand>
</feature>
<accession>Q58129</accession>
<gene>
    <name type="ordered locus">MJ0719</name>
</gene>
<keyword id="KW-0067">ATP-binding</keyword>
<keyword id="KW-0547">Nucleotide-binding</keyword>
<keyword id="KW-1185">Reference proteome</keyword>
<keyword id="KW-0677">Repeat</keyword>
<keyword id="KW-0813">Transport</keyword>
<protein>
    <recommendedName>
        <fullName>Uncharacterized ABC transporter ATP-binding protein MJ0719</fullName>
    </recommendedName>
</protein>
<proteinExistence type="inferred from homology"/>
<organism>
    <name type="scientific">Methanocaldococcus jannaschii (strain ATCC 43067 / DSM 2661 / JAL-1 / JCM 10045 / NBRC 100440)</name>
    <name type="common">Methanococcus jannaschii</name>
    <dbReference type="NCBI Taxonomy" id="243232"/>
    <lineage>
        <taxon>Archaea</taxon>
        <taxon>Methanobacteriati</taxon>
        <taxon>Methanobacteriota</taxon>
        <taxon>Methanomada group</taxon>
        <taxon>Methanococci</taxon>
        <taxon>Methanococcales</taxon>
        <taxon>Methanocaldococcaceae</taxon>
        <taxon>Methanocaldococcus</taxon>
    </lineage>
</organism>